<name>MURE_NEIMB</name>
<proteinExistence type="inferred from homology"/>
<gene>
    <name evidence="1" type="primary">murE</name>
    <name type="ordered locus">NMB0414</name>
</gene>
<evidence type="ECO:0000255" key="1">
    <source>
        <dbReference type="HAMAP-Rule" id="MF_00208"/>
    </source>
</evidence>
<sequence length="492" mass="53045">MFSKLTPLAETGIPTLSCANAAGRLLHSDSRQIKQGDIFVACPGEYADGRSYIPAAVANGAAFVFWDDDGKFAWNPEWKVPNQGIKDLKHRAGILAAQVYGNVSDGLKVWGVAGTNGKTSITQWLAQAADLLGEKTAIVGTVGNGFWGALEETTHTTPAPVDVQTLLYRFRQQGATVAAMEVSSHGLDQSRVNGVSFRSAIFTNLTRDHLDYHGTMEAYGAIKSRLFYWHGLKHAVINVDDEYGAELVGRLKKDCPDLAVYSYGFSEHADIRITDFTASSDGIAAVFQTPWGEGKCRTRLLGRFNAQNLAACIALLCANGYPLDKVLDVLAKIRPASGRMDCIMNSGKPLVVVDYAHTPDALEKALATLQEIKPQGAALWCVFGCGGNRDRGKRPLMGAAAVQGADKVVVTSDNPRLENPHDIINDILPAVPAPECVEADRAAAVRYAVEQAAANDIILIAGKGHENYQDVQGVKHRFSDLEIVGQALLTRK</sequence>
<protein>
    <recommendedName>
        <fullName evidence="1">UDP-N-acetylmuramoyl-L-alanyl-D-glutamate--2,6-diaminopimelate ligase</fullName>
        <ecNumber evidence="1">6.3.2.13</ecNumber>
    </recommendedName>
    <alternativeName>
        <fullName evidence="1">Meso-A2pm-adding enzyme</fullName>
    </alternativeName>
    <alternativeName>
        <fullName evidence="1">Meso-diaminopimelate-adding enzyme</fullName>
    </alternativeName>
    <alternativeName>
        <fullName evidence="1">UDP-MurNAc-L-Ala-D-Glu:meso-diaminopimelate ligase</fullName>
    </alternativeName>
    <alternativeName>
        <fullName evidence="1">UDP-MurNAc-tripeptide synthetase</fullName>
    </alternativeName>
    <alternativeName>
        <fullName evidence="1">UDP-N-acetylmuramyl-tripeptide synthetase</fullName>
    </alternativeName>
</protein>
<comment type="function">
    <text evidence="1">Catalyzes the addition of meso-diaminopimelic acid to the nucleotide precursor UDP-N-acetylmuramoyl-L-alanyl-D-glutamate (UMAG) in the biosynthesis of bacterial cell-wall peptidoglycan.</text>
</comment>
<comment type="catalytic activity">
    <reaction evidence="1">
        <text>UDP-N-acetyl-alpha-D-muramoyl-L-alanyl-D-glutamate + meso-2,6-diaminopimelate + ATP = UDP-N-acetyl-alpha-D-muramoyl-L-alanyl-gamma-D-glutamyl-meso-2,6-diaminopimelate + ADP + phosphate + H(+)</text>
        <dbReference type="Rhea" id="RHEA:23676"/>
        <dbReference type="ChEBI" id="CHEBI:15378"/>
        <dbReference type="ChEBI" id="CHEBI:30616"/>
        <dbReference type="ChEBI" id="CHEBI:43474"/>
        <dbReference type="ChEBI" id="CHEBI:57791"/>
        <dbReference type="ChEBI" id="CHEBI:83900"/>
        <dbReference type="ChEBI" id="CHEBI:83905"/>
        <dbReference type="ChEBI" id="CHEBI:456216"/>
        <dbReference type="EC" id="6.3.2.13"/>
    </reaction>
</comment>
<comment type="cofactor">
    <cofactor evidence="1">
        <name>Mg(2+)</name>
        <dbReference type="ChEBI" id="CHEBI:18420"/>
    </cofactor>
</comment>
<comment type="pathway">
    <text evidence="1">Cell wall biogenesis; peptidoglycan biosynthesis.</text>
</comment>
<comment type="subcellular location">
    <subcellularLocation>
        <location evidence="1">Cytoplasm</location>
    </subcellularLocation>
</comment>
<comment type="PTM">
    <text evidence="1">Carboxylation is probably crucial for Mg(2+) binding and, consequently, for the gamma-phosphate positioning of ATP.</text>
</comment>
<comment type="similarity">
    <text evidence="1">Belongs to the MurCDEF family. MurE subfamily.</text>
</comment>
<keyword id="KW-0067">ATP-binding</keyword>
<keyword id="KW-0131">Cell cycle</keyword>
<keyword id="KW-0132">Cell division</keyword>
<keyword id="KW-0133">Cell shape</keyword>
<keyword id="KW-0961">Cell wall biogenesis/degradation</keyword>
<keyword id="KW-0963">Cytoplasm</keyword>
<keyword id="KW-0436">Ligase</keyword>
<keyword id="KW-0460">Magnesium</keyword>
<keyword id="KW-0547">Nucleotide-binding</keyword>
<keyword id="KW-0573">Peptidoglycan synthesis</keyword>
<keyword id="KW-1185">Reference proteome</keyword>
<dbReference type="EC" id="6.3.2.13" evidence="1"/>
<dbReference type="EMBL" id="AE002098">
    <property type="protein sequence ID" value="AAF40853.1"/>
    <property type="molecule type" value="Genomic_DNA"/>
</dbReference>
<dbReference type="PIR" id="C81202">
    <property type="entry name" value="C81202"/>
</dbReference>
<dbReference type="RefSeq" id="NP_273463.1">
    <property type="nucleotide sequence ID" value="NC_003112.2"/>
</dbReference>
<dbReference type="RefSeq" id="WP_002224920.1">
    <property type="nucleotide sequence ID" value="NC_003112.2"/>
</dbReference>
<dbReference type="SMR" id="Q9K0Y9"/>
<dbReference type="FunCoup" id="Q9K0Y9">
    <property type="interactions" value="529"/>
</dbReference>
<dbReference type="STRING" id="122586.NMB0414"/>
<dbReference type="PaxDb" id="122586-NMB0414"/>
<dbReference type="KEGG" id="nme:NMB0414"/>
<dbReference type="PATRIC" id="fig|122586.8.peg.524"/>
<dbReference type="HOGENOM" id="CLU_022291_3_2_4"/>
<dbReference type="InParanoid" id="Q9K0Y9"/>
<dbReference type="OrthoDB" id="9800958at2"/>
<dbReference type="UniPathway" id="UPA00219"/>
<dbReference type="Proteomes" id="UP000000425">
    <property type="component" value="Chromosome"/>
</dbReference>
<dbReference type="GO" id="GO:0005737">
    <property type="term" value="C:cytoplasm"/>
    <property type="evidence" value="ECO:0007669"/>
    <property type="project" value="UniProtKB-SubCell"/>
</dbReference>
<dbReference type="GO" id="GO:0005524">
    <property type="term" value="F:ATP binding"/>
    <property type="evidence" value="ECO:0007669"/>
    <property type="project" value="UniProtKB-UniRule"/>
</dbReference>
<dbReference type="GO" id="GO:0000287">
    <property type="term" value="F:magnesium ion binding"/>
    <property type="evidence" value="ECO:0007669"/>
    <property type="project" value="UniProtKB-UniRule"/>
</dbReference>
<dbReference type="GO" id="GO:0008765">
    <property type="term" value="F:UDP-N-acetylmuramoylalanyl-D-glutamate-2,6-diaminopimelate ligase activity"/>
    <property type="evidence" value="ECO:0007669"/>
    <property type="project" value="UniProtKB-UniRule"/>
</dbReference>
<dbReference type="GO" id="GO:0051301">
    <property type="term" value="P:cell division"/>
    <property type="evidence" value="ECO:0007669"/>
    <property type="project" value="UniProtKB-KW"/>
</dbReference>
<dbReference type="GO" id="GO:0071555">
    <property type="term" value="P:cell wall organization"/>
    <property type="evidence" value="ECO:0007669"/>
    <property type="project" value="UniProtKB-KW"/>
</dbReference>
<dbReference type="GO" id="GO:0009252">
    <property type="term" value="P:peptidoglycan biosynthetic process"/>
    <property type="evidence" value="ECO:0007669"/>
    <property type="project" value="UniProtKB-UniRule"/>
</dbReference>
<dbReference type="GO" id="GO:0008360">
    <property type="term" value="P:regulation of cell shape"/>
    <property type="evidence" value="ECO:0007669"/>
    <property type="project" value="UniProtKB-KW"/>
</dbReference>
<dbReference type="Gene3D" id="3.90.190.20">
    <property type="entry name" value="Mur ligase, C-terminal domain"/>
    <property type="match status" value="1"/>
</dbReference>
<dbReference type="Gene3D" id="3.40.1190.10">
    <property type="entry name" value="Mur-like, catalytic domain"/>
    <property type="match status" value="1"/>
</dbReference>
<dbReference type="Gene3D" id="3.40.1390.10">
    <property type="entry name" value="MurE/MurF, N-terminal domain"/>
    <property type="match status" value="1"/>
</dbReference>
<dbReference type="HAMAP" id="MF_00208">
    <property type="entry name" value="MurE"/>
    <property type="match status" value="1"/>
</dbReference>
<dbReference type="InterPro" id="IPR036565">
    <property type="entry name" value="Mur-like_cat_sf"/>
</dbReference>
<dbReference type="InterPro" id="IPR004101">
    <property type="entry name" value="Mur_ligase_C"/>
</dbReference>
<dbReference type="InterPro" id="IPR036615">
    <property type="entry name" value="Mur_ligase_C_dom_sf"/>
</dbReference>
<dbReference type="InterPro" id="IPR013221">
    <property type="entry name" value="Mur_ligase_cen"/>
</dbReference>
<dbReference type="InterPro" id="IPR000713">
    <property type="entry name" value="Mur_ligase_N"/>
</dbReference>
<dbReference type="InterPro" id="IPR035911">
    <property type="entry name" value="MurE/MurF_N"/>
</dbReference>
<dbReference type="InterPro" id="IPR005761">
    <property type="entry name" value="UDP-N-AcMur-Glu-dNH2Pim_ligase"/>
</dbReference>
<dbReference type="NCBIfam" id="TIGR01085">
    <property type="entry name" value="murE"/>
    <property type="match status" value="1"/>
</dbReference>
<dbReference type="NCBIfam" id="NF001126">
    <property type="entry name" value="PRK00139.1-4"/>
    <property type="match status" value="1"/>
</dbReference>
<dbReference type="PANTHER" id="PTHR23135">
    <property type="entry name" value="MUR LIGASE FAMILY MEMBER"/>
    <property type="match status" value="1"/>
</dbReference>
<dbReference type="PANTHER" id="PTHR23135:SF4">
    <property type="entry name" value="UDP-N-ACETYLMURAMOYL-L-ALANYL-D-GLUTAMATE--2,6-DIAMINOPIMELATE LIGASE MURE HOMOLOG, CHLOROPLASTIC"/>
    <property type="match status" value="1"/>
</dbReference>
<dbReference type="Pfam" id="PF01225">
    <property type="entry name" value="Mur_ligase"/>
    <property type="match status" value="1"/>
</dbReference>
<dbReference type="Pfam" id="PF02875">
    <property type="entry name" value="Mur_ligase_C"/>
    <property type="match status" value="1"/>
</dbReference>
<dbReference type="Pfam" id="PF08245">
    <property type="entry name" value="Mur_ligase_M"/>
    <property type="match status" value="1"/>
</dbReference>
<dbReference type="SUPFAM" id="SSF53623">
    <property type="entry name" value="MurD-like peptide ligases, catalytic domain"/>
    <property type="match status" value="1"/>
</dbReference>
<dbReference type="SUPFAM" id="SSF53244">
    <property type="entry name" value="MurD-like peptide ligases, peptide-binding domain"/>
    <property type="match status" value="1"/>
</dbReference>
<dbReference type="SUPFAM" id="SSF63418">
    <property type="entry name" value="MurE/MurF N-terminal domain"/>
    <property type="match status" value="1"/>
</dbReference>
<organism>
    <name type="scientific">Neisseria meningitidis serogroup B (strain ATCC BAA-335 / MC58)</name>
    <dbReference type="NCBI Taxonomy" id="122586"/>
    <lineage>
        <taxon>Bacteria</taxon>
        <taxon>Pseudomonadati</taxon>
        <taxon>Pseudomonadota</taxon>
        <taxon>Betaproteobacteria</taxon>
        <taxon>Neisseriales</taxon>
        <taxon>Neisseriaceae</taxon>
        <taxon>Neisseria</taxon>
    </lineage>
</organism>
<accession>Q9K0Y9</accession>
<reference key="1">
    <citation type="journal article" date="2000" name="Science">
        <title>Complete genome sequence of Neisseria meningitidis serogroup B strain MC58.</title>
        <authorList>
            <person name="Tettelin H."/>
            <person name="Saunders N.J."/>
            <person name="Heidelberg J.F."/>
            <person name="Jeffries A.C."/>
            <person name="Nelson K.E."/>
            <person name="Eisen J.A."/>
            <person name="Ketchum K.A."/>
            <person name="Hood D.W."/>
            <person name="Peden J.F."/>
            <person name="Dodson R.J."/>
            <person name="Nelson W.C."/>
            <person name="Gwinn M.L."/>
            <person name="DeBoy R.T."/>
            <person name="Peterson J.D."/>
            <person name="Hickey E.K."/>
            <person name="Haft D.H."/>
            <person name="Salzberg S.L."/>
            <person name="White O."/>
            <person name="Fleischmann R.D."/>
            <person name="Dougherty B.A."/>
            <person name="Mason T.M."/>
            <person name="Ciecko A."/>
            <person name="Parksey D.S."/>
            <person name="Blair E."/>
            <person name="Cittone H."/>
            <person name="Clark E.B."/>
            <person name="Cotton M.D."/>
            <person name="Utterback T.R."/>
            <person name="Khouri H.M."/>
            <person name="Qin H."/>
            <person name="Vamathevan J.J."/>
            <person name="Gill J."/>
            <person name="Scarlato V."/>
            <person name="Masignani V."/>
            <person name="Pizza M."/>
            <person name="Grandi G."/>
            <person name="Sun L."/>
            <person name="Smith H.O."/>
            <person name="Fraser C.M."/>
            <person name="Moxon E.R."/>
            <person name="Rappuoli R."/>
            <person name="Venter J.C."/>
        </authorList>
    </citation>
    <scope>NUCLEOTIDE SEQUENCE [LARGE SCALE GENOMIC DNA]</scope>
    <source>
        <strain>ATCC BAA-335 / MC58</strain>
    </source>
</reference>
<feature type="chain" id="PRO_0000101916" description="UDP-N-acetylmuramoyl-L-alanyl-D-glutamate--2,6-diaminopimelate ligase">
    <location>
        <begin position="1"/>
        <end position="492"/>
    </location>
</feature>
<feature type="short sequence motif" description="Meso-diaminopimelate recognition motif">
    <location>
        <begin position="413"/>
        <end position="416"/>
    </location>
</feature>
<feature type="binding site" evidence="1">
    <location>
        <position position="30"/>
    </location>
    <ligand>
        <name>UDP-N-acetyl-alpha-D-muramoyl-L-alanyl-D-glutamate</name>
        <dbReference type="ChEBI" id="CHEBI:83900"/>
    </ligand>
</feature>
<feature type="binding site" evidence="1">
    <location>
        <begin position="114"/>
        <end position="120"/>
    </location>
    <ligand>
        <name>ATP</name>
        <dbReference type="ChEBI" id="CHEBI:30616"/>
    </ligand>
</feature>
<feature type="binding site" evidence="1">
    <location>
        <begin position="156"/>
        <end position="157"/>
    </location>
    <ligand>
        <name>UDP-N-acetyl-alpha-D-muramoyl-L-alanyl-D-glutamate</name>
        <dbReference type="ChEBI" id="CHEBI:83900"/>
    </ligand>
</feature>
<feature type="binding site" evidence="1">
    <location>
        <position position="183"/>
    </location>
    <ligand>
        <name>UDP-N-acetyl-alpha-D-muramoyl-L-alanyl-D-glutamate</name>
        <dbReference type="ChEBI" id="CHEBI:83900"/>
    </ligand>
</feature>
<feature type="binding site" evidence="1">
    <location>
        <position position="189"/>
    </location>
    <ligand>
        <name>UDP-N-acetyl-alpha-D-muramoyl-L-alanyl-D-glutamate</name>
        <dbReference type="ChEBI" id="CHEBI:83900"/>
    </ligand>
</feature>
<feature type="binding site" evidence="1">
    <location>
        <position position="191"/>
    </location>
    <ligand>
        <name>UDP-N-acetyl-alpha-D-muramoyl-L-alanyl-D-glutamate</name>
        <dbReference type="ChEBI" id="CHEBI:83900"/>
    </ligand>
</feature>
<feature type="binding site" evidence="1">
    <location>
        <position position="389"/>
    </location>
    <ligand>
        <name>meso-2,6-diaminopimelate</name>
        <dbReference type="ChEBI" id="CHEBI:57791"/>
    </ligand>
</feature>
<feature type="binding site" evidence="1">
    <location>
        <begin position="413"/>
        <end position="416"/>
    </location>
    <ligand>
        <name>meso-2,6-diaminopimelate</name>
        <dbReference type="ChEBI" id="CHEBI:57791"/>
    </ligand>
</feature>
<feature type="binding site" evidence="1">
    <location>
        <position position="462"/>
    </location>
    <ligand>
        <name>meso-2,6-diaminopimelate</name>
        <dbReference type="ChEBI" id="CHEBI:57791"/>
    </ligand>
</feature>
<feature type="binding site" evidence="1">
    <location>
        <position position="466"/>
    </location>
    <ligand>
        <name>meso-2,6-diaminopimelate</name>
        <dbReference type="ChEBI" id="CHEBI:57791"/>
    </ligand>
</feature>
<feature type="modified residue" description="N6-carboxylysine" evidence="1">
    <location>
        <position position="223"/>
    </location>
</feature>